<dbReference type="EMBL" id="AF330807">
    <property type="protein sequence ID" value="AAL59436.1"/>
    <property type="molecule type" value="Genomic_DNA"/>
</dbReference>
<dbReference type="SMR" id="Q8WDK6"/>
<dbReference type="GO" id="GO:0005743">
    <property type="term" value="C:mitochondrial inner membrane"/>
    <property type="evidence" value="ECO:0007669"/>
    <property type="project" value="UniProtKB-SubCell"/>
</dbReference>
<dbReference type="GO" id="GO:0045275">
    <property type="term" value="C:respiratory chain complex III"/>
    <property type="evidence" value="ECO:0007669"/>
    <property type="project" value="InterPro"/>
</dbReference>
<dbReference type="GO" id="GO:0046872">
    <property type="term" value="F:metal ion binding"/>
    <property type="evidence" value="ECO:0007669"/>
    <property type="project" value="UniProtKB-KW"/>
</dbReference>
<dbReference type="GO" id="GO:0008121">
    <property type="term" value="F:ubiquinol-cytochrome-c reductase activity"/>
    <property type="evidence" value="ECO:0007669"/>
    <property type="project" value="InterPro"/>
</dbReference>
<dbReference type="GO" id="GO:0006122">
    <property type="term" value="P:mitochondrial electron transport, ubiquinol to cytochrome c"/>
    <property type="evidence" value="ECO:0007669"/>
    <property type="project" value="TreeGrafter"/>
</dbReference>
<dbReference type="CDD" id="cd00290">
    <property type="entry name" value="cytochrome_b_C"/>
    <property type="match status" value="1"/>
</dbReference>
<dbReference type="CDD" id="cd00284">
    <property type="entry name" value="Cytochrome_b_N"/>
    <property type="match status" value="1"/>
</dbReference>
<dbReference type="FunFam" id="1.20.810.10:FF:000002">
    <property type="entry name" value="Cytochrome b"/>
    <property type="match status" value="1"/>
</dbReference>
<dbReference type="Gene3D" id="1.20.810.10">
    <property type="entry name" value="Cytochrome Bc1 Complex, Chain C"/>
    <property type="match status" value="1"/>
</dbReference>
<dbReference type="InterPro" id="IPR005798">
    <property type="entry name" value="Cyt_b/b6_C"/>
</dbReference>
<dbReference type="InterPro" id="IPR036150">
    <property type="entry name" value="Cyt_b/b6_C_sf"/>
</dbReference>
<dbReference type="InterPro" id="IPR005797">
    <property type="entry name" value="Cyt_b/b6_N"/>
</dbReference>
<dbReference type="InterPro" id="IPR027387">
    <property type="entry name" value="Cytb/b6-like_sf"/>
</dbReference>
<dbReference type="InterPro" id="IPR030689">
    <property type="entry name" value="Cytochrome_b"/>
</dbReference>
<dbReference type="InterPro" id="IPR048260">
    <property type="entry name" value="Cytochrome_b_C_euk/bac"/>
</dbReference>
<dbReference type="InterPro" id="IPR048259">
    <property type="entry name" value="Cytochrome_b_N_euk/bac"/>
</dbReference>
<dbReference type="InterPro" id="IPR016174">
    <property type="entry name" value="Di-haem_cyt_TM"/>
</dbReference>
<dbReference type="PANTHER" id="PTHR19271">
    <property type="entry name" value="CYTOCHROME B"/>
    <property type="match status" value="1"/>
</dbReference>
<dbReference type="PANTHER" id="PTHR19271:SF16">
    <property type="entry name" value="CYTOCHROME B"/>
    <property type="match status" value="1"/>
</dbReference>
<dbReference type="Pfam" id="PF00032">
    <property type="entry name" value="Cytochrom_B_C"/>
    <property type="match status" value="1"/>
</dbReference>
<dbReference type="Pfam" id="PF00033">
    <property type="entry name" value="Cytochrome_B"/>
    <property type="match status" value="1"/>
</dbReference>
<dbReference type="PIRSF" id="PIRSF038885">
    <property type="entry name" value="COB"/>
    <property type="match status" value="1"/>
</dbReference>
<dbReference type="SUPFAM" id="SSF81648">
    <property type="entry name" value="a domain/subunit of cytochrome bc1 complex (Ubiquinol-cytochrome c reductase)"/>
    <property type="match status" value="1"/>
</dbReference>
<dbReference type="SUPFAM" id="SSF81342">
    <property type="entry name" value="Transmembrane di-heme cytochromes"/>
    <property type="match status" value="1"/>
</dbReference>
<dbReference type="PROSITE" id="PS51003">
    <property type="entry name" value="CYTB_CTER"/>
    <property type="match status" value="1"/>
</dbReference>
<dbReference type="PROSITE" id="PS51002">
    <property type="entry name" value="CYTB_NTER"/>
    <property type="match status" value="1"/>
</dbReference>
<protein>
    <recommendedName>
        <fullName>Cytochrome b</fullName>
    </recommendedName>
    <alternativeName>
        <fullName>Complex III subunit 3</fullName>
    </alternativeName>
    <alternativeName>
        <fullName>Complex III subunit III</fullName>
    </alternativeName>
    <alternativeName>
        <fullName>Cytochrome b-c1 complex subunit 3</fullName>
    </alternativeName>
    <alternativeName>
        <fullName>Ubiquinol-cytochrome-c reductase complex cytochrome b subunit</fullName>
    </alternativeName>
</protein>
<name>CYB_PTEPA</name>
<evidence type="ECO:0000250" key="1"/>
<evidence type="ECO:0000250" key="2">
    <source>
        <dbReference type="UniProtKB" id="P00157"/>
    </source>
</evidence>
<evidence type="ECO:0000255" key="3">
    <source>
        <dbReference type="PROSITE-ProRule" id="PRU00967"/>
    </source>
</evidence>
<evidence type="ECO:0000255" key="4">
    <source>
        <dbReference type="PROSITE-ProRule" id="PRU00968"/>
    </source>
</evidence>
<organism>
    <name type="scientific">Pteronotus parnellii</name>
    <name type="common">Parnell's mustached bat</name>
    <dbReference type="NCBI Taxonomy" id="59476"/>
    <lineage>
        <taxon>Eukaryota</taxon>
        <taxon>Metazoa</taxon>
        <taxon>Chordata</taxon>
        <taxon>Craniata</taxon>
        <taxon>Vertebrata</taxon>
        <taxon>Euteleostomi</taxon>
        <taxon>Mammalia</taxon>
        <taxon>Eutheria</taxon>
        <taxon>Laurasiatheria</taxon>
        <taxon>Chiroptera</taxon>
        <taxon>Yangochiroptera</taxon>
        <taxon>Mormoopidae</taxon>
        <taxon>Pteronotus</taxon>
    </lineage>
</organism>
<keyword id="KW-0249">Electron transport</keyword>
<keyword id="KW-0349">Heme</keyword>
<keyword id="KW-0408">Iron</keyword>
<keyword id="KW-0472">Membrane</keyword>
<keyword id="KW-0479">Metal-binding</keyword>
<keyword id="KW-0496">Mitochondrion</keyword>
<keyword id="KW-0999">Mitochondrion inner membrane</keyword>
<keyword id="KW-0679">Respiratory chain</keyword>
<keyword id="KW-0812">Transmembrane</keyword>
<keyword id="KW-1133">Transmembrane helix</keyword>
<keyword id="KW-0813">Transport</keyword>
<keyword id="KW-0830">Ubiquinone</keyword>
<geneLocation type="mitochondrion"/>
<gene>
    <name type="primary">MT-CYB</name>
    <name type="synonym">COB</name>
    <name type="synonym">CYTB</name>
    <name type="synonym">MTCYB</name>
</gene>
<sequence length="379" mass="42549">MTNIRKTHPLLKIVNESLVDLPVPSSVSSWWNFGSLLAACLAVQILTGLFLAMHYTSDTATAFNSVTHICRDVNYGWILRYLHANGASMFFICLYIHIGRGMYYGSYMYSETWNIGIILLFAVMATAFMGYVLPWGQMSLWGATVITNLLSAIPYIGTDLVQWIWGGFSVDKATLTRFFAFHFLLPFIIAALVVVHLLFLHETGSSNPTGIPSDSDMVPFHPYHTIKDILGILAMLTLLSTLVLFSPDLLGDPDNYIPANPLNTPPHIKPEWYFLFAYAILRSIPNKLGGVLALVLSILVLAVIPLLHMSKQRTMMFRPISQCLFWLLVADLLTLTWIGGQPVEHPYIIIGQMASIMYFTIILVLMPATSMMENHLLKW</sequence>
<accession>Q8WDK6</accession>
<feature type="chain" id="PRO_0000061463" description="Cytochrome b">
    <location>
        <begin position="1"/>
        <end position="379"/>
    </location>
</feature>
<feature type="transmembrane region" description="Helical" evidence="2">
    <location>
        <begin position="33"/>
        <end position="53"/>
    </location>
</feature>
<feature type="transmembrane region" description="Helical" evidence="2">
    <location>
        <begin position="77"/>
        <end position="98"/>
    </location>
</feature>
<feature type="transmembrane region" description="Helical" evidence="2">
    <location>
        <begin position="113"/>
        <end position="133"/>
    </location>
</feature>
<feature type="transmembrane region" description="Helical" evidence="2">
    <location>
        <begin position="178"/>
        <end position="198"/>
    </location>
</feature>
<feature type="transmembrane region" description="Helical" evidence="2">
    <location>
        <begin position="226"/>
        <end position="246"/>
    </location>
</feature>
<feature type="transmembrane region" description="Helical" evidence="2">
    <location>
        <begin position="288"/>
        <end position="308"/>
    </location>
</feature>
<feature type="transmembrane region" description="Helical" evidence="2">
    <location>
        <begin position="320"/>
        <end position="340"/>
    </location>
</feature>
<feature type="transmembrane region" description="Helical" evidence="2">
    <location>
        <begin position="347"/>
        <end position="367"/>
    </location>
</feature>
<feature type="binding site" description="axial binding residue" evidence="2">
    <location>
        <position position="83"/>
    </location>
    <ligand>
        <name>heme b</name>
        <dbReference type="ChEBI" id="CHEBI:60344"/>
        <label>b562</label>
    </ligand>
    <ligandPart>
        <name>Fe</name>
        <dbReference type="ChEBI" id="CHEBI:18248"/>
    </ligandPart>
</feature>
<feature type="binding site" description="axial binding residue" evidence="2">
    <location>
        <position position="97"/>
    </location>
    <ligand>
        <name>heme b</name>
        <dbReference type="ChEBI" id="CHEBI:60344"/>
        <label>b566</label>
    </ligand>
    <ligandPart>
        <name>Fe</name>
        <dbReference type="ChEBI" id="CHEBI:18248"/>
    </ligandPart>
</feature>
<feature type="binding site" description="axial binding residue" evidence="2">
    <location>
        <position position="182"/>
    </location>
    <ligand>
        <name>heme b</name>
        <dbReference type="ChEBI" id="CHEBI:60344"/>
        <label>b562</label>
    </ligand>
    <ligandPart>
        <name>Fe</name>
        <dbReference type="ChEBI" id="CHEBI:18248"/>
    </ligandPart>
</feature>
<feature type="binding site" description="axial binding residue" evidence="2">
    <location>
        <position position="196"/>
    </location>
    <ligand>
        <name>heme b</name>
        <dbReference type="ChEBI" id="CHEBI:60344"/>
        <label>b566</label>
    </ligand>
    <ligandPart>
        <name>Fe</name>
        <dbReference type="ChEBI" id="CHEBI:18248"/>
    </ligandPart>
</feature>
<feature type="binding site" evidence="2">
    <location>
        <position position="201"/>
    </location>
    <ligand>
        <name>a ubiquinone</name>
        <dbReference type="ChEBI" id="CHEBI:16389"/>
    </ligand>
</feature>
<proteinExistence type="inferred from homology"/>
<reference key="1">
    <citation type="submission" date="2000-12" db="EMBL/GenBank/DDBJ databases">
        <title>Molecular evidence for evolution of piscivory in Noctilio (Chiroptera: Noctilionidae).</title>
        <authorList>
            <person name="Lewis-Oritt N."/>
            <person name="Van Den Bussche R.A."/>
            <person name="Baker R.J."/>
        </authorList>
    </citation>
    <scope>NUCLEOTIDE SEQUENCE [GENOMIC DNA]</scope>
    <source>
        <strain>Isolate TK 17953</strain>
    </source>
</reference>
<comment type="function">
    <text evidence="2">Component of the ubiquinol-cytochrome c reductase complex (complex III or cytochrome b-c1 complex) that is part of the mitochondrial respiratory chain. The b-c1 complex mediates electron transfer from ubiquinol to cytochrome c. Contributes to the generation of a proton gradient across the mitochondrial membrane that is then used for ATP synthesis.</text>
</comment>
<comment type="cofactor">
    <cofactor evidence="2">
        <name>heme b</name>
        <dbReference type="ChEBI" id="CHEBI:60344"/>
    </cofactor>
    <text evidence="2">Binds 2 heme b groups non-covalently.</text>
</comment>
<comment type="subunit">
    <text evidence="2">The cytochrome bc1 complex contains 11 subunits: 3 respiratory subunits (MT-CYB, CYC1 and UQCRFS1), 2 core proteins (UQCRC1 and UQCRC2) and 6 low-molecular weight proteins (UQCRH/QCR6, UQCRB/QCR7, UQCRQ/QCR8, UQCR10/QCR9, UQCR11/QCR10 and a cleavage product of UQCRFS1). This cytochrome bc1 complex then forms a dimer.</text>
</comment>
<comment type="subcellular location">
    <subcellularLocation>
        <location evidence="2">Mitochondrion inner membrane</location>
        <topology evidence="2">Multi-pass membrane protein</topology>
    </subcellularLocation>
</comment>
<comment type="miscellaneous">
    <text evidence="1">Heme 1 (or BL or b562) is low-potential and absorbs at about 562 nm, and heme 2 (or BH or b566) is high-potential and absorbs at about 566 nm.</text>
</comment>
<comment type="similarity">
    <text evidence="3 4">Belongs to the cytochrome b family.</text>
</comment>
<comment type="caution">
    <text evidence="2">The full-length protein contains only eight transmembrane helices, not nine as predicted by bioinformatics tools.</text>
</comment>